<sequence length="190" mass="20673">MAERENRRGNRRDREEAAPEFADRLVAINRVSKTVKGGKRFGFAALVVVGDQKGRVGFGKGKAKEVPEAIRKATEQAKRQMIRVQLREGRTLHHDIEGRHGAGKVVMRAAPEGTGIIAGGPMRAVFEMLGVKDVVSKSLGSANPYNMIRATIDGLKKEQSPRSVAQRRGKKVADILPKRDEAPAAEAAEA</sequence>
<evidence type="ECO:0000255" key="1">
    <source>
        <dbReference type="HAMAP-Rule" id="MF_01307"/>
    </source>
</evidence>
<evidence type="ECO:0000256" key="2">
    <source>
        <dbReference type="SAM" id="MobiDB-lite"/>
    </source>
</evidence>
<evidence type="ECO:0000305" key="3"/>
<reference key="1">
    <citation type="journal article" date="2004" name="Nature">
        <title>Genome sequence of Silicibacter pomeroyi reveals adaptations to the marine environment.</title>
        <authorList>
            <person name="Moran M.A."/>
            <person name="Buchan A."/>
            <person name="Gonzalez J.M."/>
            <person name="Heidelberg J.F."/>
            <person name="Whitman W.B."/>
            <person name="Kiene R.P."/>
            <person name="Henriksen J.R."/>
            <person name="King G.M."/>
            <person name="Belas R."/>
            <person name="Fuqua C."/>
            <person name="Brinkac L.M."/>
            <person name="Lewis M."/>
            <person name="Johri S."/>
            <person name="Weaver B."/>
            <person name="Pai G."/>
            <person name="Eisen J.A."/>
            <person name="Rahe E."/>
            <person name="Sheldon W.M."/>
            <person name="Ye W."/>
            <person name="Miller T.R."/>
            <person name="Carlton J."/>
            <person name="Rasko D.A."/>
            <person name="Paulsen I.T."/>
            <person name="Ren Q."/>
            <person name="Daugherty S.C."/>
            <person name="DeBoy R.T."/>
            <person name="Dodson R.J."/>
            <person name="Durkin A.S."/>
            <person name="Madupu R."/>
            <person name="Nelson W.C."/>
            <person name="Sullivan S.A."/>
            <person name="Rosovitz M.J."/>
            <person name="Haft D.H."/>
            <person name="Selengut J."/>
            <person name="Ward N."/>
        </authorList>
    </citation>
    <scope>NUCLEOTIDE SEQUENCE [LARGE SCALE GENOMIC DNA]</scope>
    <source>
        <strain>ATCC 700808 / DSM 15171 / DSS-3</strain>
    </source>
</reference>
<reference key="2">
    <citation type="journal article" date="2014" name="Stand. Genomic Sci.">
        <title>An updated genome annotation for the model marine bacterium Ruegeria pomeroyi DSS-3.</title>
        <authorList>
            <person name="Rivers A.R."/>
            <person name="Smith C.B."/>
            <person name="Moran M.A."/>
        </authorList>
    </citation>
    <scope>GENOME REANNOTATION</scope>
    <source>
        <strain>ATCC 700808 / DSM 15171 / DSS-3</strain>
    </source>
</reference>
<gene>
    <name evidence="1" type="primary">rpsE</name>
    <name type="ordered locus">SPO0502</name>
</gene>
<accession>Q5LW41</accession>
<feature type="chain" id="PRO_0000131592" description="Small ribosomal subunit protein uS5">
    <location>
        <begin position="1"/>
        <end position="190"/>
    </location>
</feature>
<feature type="domain" description="S5 DRBM" evidence="1">
    <location>
        <begin position="21"/>
        <end position="84"/>
    </location>
</feature>
<feature type="region of interest" description="Disordered" evidence="2">
    <location>
        <begin position="156"/>
        <end position="190"/>
    </location>
</feature>
<feature type="compositionally biased region" description="Basic and acidic residues" evidence="2">
    <location>
        <begin position="171"/>
        <end position="182"/>
    </location>
</feature>
<proteinExistence type="inferred from homology"/>
<comment type="function">
    <text evidence="1">With S4 and S12 plays an important role in translational accuracy.</text>
</comment>
<comment type="function">
    <text evidence="1">Located at the back of the 30S subunit body where it stabilizes the conformation of the head with respect to the body.</text>
</comment>
<comment type="subunit">
    <text evidence="1">Part of the 30S ribosomal subunit. Contacts proteins S4 and S8.</text>
</comment>
<comment type="domain">
    <text>The N-terminal domain interacts with the head of the 30S subunit; the C-terminal domain interacts with the body and contacts protein S4. The interaction surface between S4 and S5 is involved in control of translational fidelity.</text>
</comment>
<comment type="similarity">
    <text evidence="1">Belongs to the universal ribosomal protein uS5 family.</text>
</comment>
<protein>
    <recommendedName>
        <fullName evidence="1">Small ribosomal subunit protein uS5</fullName>
    </recommendedName>
    <alternativeName>
        <fullName evidence="3">30S ribosomal protein S5</fullName>
    </alternativeName>
</protein>
<organism>
    <name type="scientific">Ruegeria pomeroyi (strain ATCC 700808 / DSM 15171 / DSS-3)</name>
    <name type="common">Silicibacter pomeroyi</name>
    <dbReference type="NCBI Taxonomy" id="246200"/>
    <lineage>
        <taxon>Bacteria</taxon>
        <taxon>Pseudomonadati</taxon>
        <taxon>Pseudomonadota</taxon>
        <taxon>Alphaproteobacteria</taxon>
        <taxon>Rhodobacterales</taxon>
        <taxon>Roseobacteraceae</taxon>
        <taxon>Ruegeria</taxon>
    </lineage>
</organism>
<keyword id="KW-1185">Reference proteome</keyword>
<keyword id="KW-0687">Ribonucleoprotein</keyword>
<keyword id="KW-0689">Ribosomal protein</keyword>
<keyword id="KW-0694">RNA-binding</keyword>
<keyword id="KW-0699">rRNA-binding</keyword>
<name>RS5_RUEPO</name>
<dbReference type="EMBL" id="CP000031">
    <property type="protein sequence ID" value="AAV93819.1"/>
    <property type="molecule type" value="Genomic_DNA"/>
</dbReference>
<dbReference type="RefSeq" id="WP_011046261.1">
    <property type="nucleotide sequence ID" value="NC_003911.12"/>
</dbReference>
<dbReference type="SMR" id="Q5LW41"/>
<dbReference type="STRING" id="246200.SPO0502"/>
<dbReference type="PaxDb" id="246200-SPO0502"/>
<dbReference type="KEGG" id="sil:SPO0502"/>
<dbReference type="eggNOG" id="COG0098">
    <property type="taxonomic scope" value="Bacteria"/>
</dbReference>
<dbReference type="HOGENOM" id="CLU_065898_2_2_5"/>
<dbReference type="OrthoDB" id="9809045at2"/>
<dbReference type="Proteomes" id="UP000001023">
    <property type="component" value="Chromosome"/>
</dbReference>
<dbReference type="GO" id="GO:0015935">
    <property type="term" value="C:small ribosomal subunit"/>
    <property type="evidence" value="ECO:0007669"/>
    <property type="project" value="InterPro"/>
</dbReference>
<dbReference type="GO" id="GO:0019843">
    <property type="term" value="F:rRNA binding"/>
    <property type="evidence" value="ECO:0007669"/>
    <property type="project" value="UniProtKB-UniRule"/>
</dbReference>
<dbReference type="GO" id="GO:0003735">
    <property type="term" value="F:structural constituent of ribosome"/>
    <property type="evidence" value="ECO:0007669"/>
    <property type="project" value="InterPro"/>
</dbReference>
<dbReference type="GO" id="GO:0006412">
    <property type="term" value="P:translation"/>
    <property type="evidence" value="ECO:0007669"/>
    <property type="project" value="UniProtKB-UniRule"/>
</dbReference>
<dbReference type="FunFam" id="3.30.160.20:FF:000001">
    <property type="entry name" value="30S ribosomal protein S5"/>
    <property type="match status" value="1"/>
</dbReference>
<dbReference type="FunFam" id="3.30.230.10:FF:000002">
    <property type="entry name" value="30S ribosomal protein S5"/>
    <property type="match status" value="1"/>
</dbReference>
<dbReference type="Gene3D" id="3.30.160.20">
    <property type="match status" value="1"/>
</dbReference>
<dbReference type="Gene3D" id="3.30.230.10">
    <property type="match status" value="1"/>
</dbReference>
<dbReference type="HAMAP" id="MF_01307_B">
    <property type="entry name" value="Ribosomal_uS5_B"/>
    <property type="match status" value="1"/>
</dbReference>
<dbReference type="InterPro" id="IPR020568">
    <property type="entry name" value="Ribosomal_Su5_D2-typ_SF"/>
</dbReference>
<dbReference type="InterPro" id="IPR000851">
    <property type="entry name" value="Ribosomal_uS5"/>
</dbReference>
<dbReference type="InterPro" id="IPR005712">
    <property type="entry name" value="Ribosomal_uS5_bac-type"/>
</dbReference>
<dbReference type="InterPro" id="IPR005324">
    <property type="entry name" value="Ribosomal_uS5_C"/>
</dbReference>
<dbReference type="InterPro" id="IPR013810">
    <property type="entry name" value="Ribosomal_uS5_N"/>
</dbReference>
<dbReference type="InterPro" id="IPR018192">
    <property type="entry name" value="Ribosomal_uS5_N_CS"/>
</dbReference>
<dbReference type="InterPro" id="IPR014721">
    <property type="entry name" value="Ribsml_uS5_D2-typ_fold_subgr"/>
</dbReference>
<dbReference type="NCBIfam" id="TIGR01021">
    <property type="entry name" value="rpsE_bact"/>
    <property type="match status" value="1"/>
</dbReference>
<dbReference type="PANTHER" id="PTHR48277">
    <property type="entry name" value="MITOCHONDRIAL RIBOSOMAL PROTEIN S5"/>
    <property type="match status" value="1"/>
</dbReference>
<dbReference type="PANTHER" id="PTHR48277:SF1">
    <property type="entry name" value="MITOCHONDRIAL RIBOSOMAL PROTEIN S5"/>
    <property type="match status" value="1"/>
</dbReference>
<dbReference type="Pfam" id="PF00333">
    <property type="entry name" value="Ribosomal_S5"/>
    <property type="match status" value="1"/>
</dbReference>
<dbReference type="Pfam" id="PF03719">
    <property type="entry name" value="Ribosomal_S5_C"/>
    <property type="match status" value="1"/>
</dbReference>
<dbReference type="SUPFAM" id="SSF54768">
    <property type="entry name" value="dsRNA-binding domain-like"/>
    <property type="match status" value="1"/>
</dbReference>
<dbReference type="SUPFAM" id="SSF54211">
    <property type="entry name" value="Ribosomal protein S5 domain 2-like"/>
    <property type="match status" value="1"/>
</dbReference>
<dbReference type="PROSITE" id="PS00585">
    <property type="entry name" value="RIBOSOMAL_S5"/>
    <property type="match status" value="1"/>
</dbReference>
<dbReference type="PROSITE" id="PS50881">
    <property type="entry name" value="S5_DSRBD"/>
    <property type="match status" value="1"/>
</dbReference>